<organism>
    <name type="scientific">Vibrio campbellii (strain ATCC BAA-1116)</name>
    <dbReference type="NCBI Taxonomy" id="2902295"/>
    <lineage>
        <taxon>Bacteria</taxon>
        <taxon>Pseudomonadati</taxon>
        <taxon>Pseudomonadota</taxon>
        <taxon>Gammaproteobacteria</taxon>
        <taxon>Vibrionales</taxon>
        <taxon>Vibrionaceae</taxon>
        <taxon>Vibrio</taxon>
    </lineage>
</organism>
<sequence length="75" mass="8055">MPITSKYTDEQVEKILAEVGAVLEKHAASPELTLMIAGNIATNVLNQQVAASQRKVIAEKFAQALISSLEVPKAH</sequence>
<dbReference type="EMBL" id="CP000789">
    <property type="protein sequence ID" value="ABU71978.1"/>
    <property type="molecule type" value="Genomic_DNA"/>
</dbReference>
<dbReference type="RefSeq" id="WP_005432983.1">
    <property type="nucleotide sequence ID" value="NC_022269.1"/>
</dbReference>
<dbReference type="SMR" id="A7MUJ3"/>
<dbReference type="KEGG" id="vha:VIBHAR_03027"/>
<dbReference type="PATRIC" id="fig|338187.25.peg.3163"/>
<dbReference type="Proteomes" id="UP000008152">
    <property type="component" value="Chromosome I"/>
</dbReference>
<dbReference type="Gene3D" id="1.10.3390.10">
    <property type="entry name" value="YejL-like"/>
    <property type="match status" value="1"/>
</dbReference>
<dbReference type="HAMAP" id="MF_00816">
    <property type="entry name" value="UPF0352"/>
    <property type="match status" value="1"/>
</dbReference>
<dbReference type="InterPro" id="IPR009857">
    <property type="entry name" value="UPF0352"/>
</dbReference>
<dbReference type="InterPro" id="IPR023202">
    <property type="entry name" value="YejL_sf"/>
</dbReference>
<dbReference type="NCBIfam" id="NF010242">
    <property type="entry name" value="PRK13689.1"/>
    <property type="match status" value="1"/>
</dbReference>
<dbReference type="Pfam" id="PF07208">
    <property type="entry name" value="DUF1414"/>
    <property type="match status" value="1"/>
</dbReference>
<dbReference type="PIRSF" id="PIRSF006188">
    <property type="entry name" value="UCP006188"/>
    <property type="match status" value="1"/>
</dbReference>
<dbReference type="SUPFAM" id="SSF158651">
    <property type="entry name" value="YejL-like"/>
    <property type="match status" value="1"/>
</dbReference>
<comment type="similarity">
    <text evidence="1">Belongs to the UPF0352 family.</text>
</comment>
<feature type="chain" id="PRO_1000062318" description="UPF0352 protein VIBHAR_03027">
    <location>
        <begin position="1"/>
        <end position="75"/>
    </location>
</feature>
<reference key="1">
    <citation type="submission" date="2007-08" db="EMBL/GenBank/DDBJ databases">
        <authorList>
            <consortium name="The Vibrio harveyi Genome Sequencing Project"/>
            <person name="Bassler B."/>
            <person name="Clifton S.W."/>
            <person name="Fulton L."/>
            <person name="Delehaunty K."/>
            <person name="Fronick C."/>
            <person name="Harrison M."/>
            <person name="Markivic C."/>
            <person name="Fulton R."/>
            <person name="Tin-Wollam A.-M."/>
            <person name="Shah N."/>
            <person name="Pepin K."/>
            <person name="Nash W."/>
            <person name="Thiruvilangam P."/>
            <person name="Bhonagiri V."/>
            <person name="Waters C."/>
            <person name="Tu K.C."/>
            <person name="Irgon J."/>
            <person name="Wilson R.K."/>
        </authorList>
    </citation>
    <scope>NUCLEOTIDE SEQUENCE [LARGE SCALE GENOMIC DNA]</scope>
    <source>
        <strain>ATCC BAA-1116 / BB120</strain>
    </source>
</reference>
<accession>A7MUJ3</accession>
<proteinExistence type="inferred from homology"/>
<gene>
    <name type="ordered locus">VIBHAR_03027</name>
</gene>
<name>Y3027_VIBC1</name>
<evidence type="ECO:0000255" key="1">
    <source>
        <dbReference type="HAMAP-Rule" id="MF_00816"/>
    </source>
</evidence>
<protein>
    <recommendedName>
        <fullName evidence="1">UPF0352 protein VIBHAR_03027</fullName>
    </recommendedName>
</protein>